<sequence>MSKKLPEDFIFGGATAAYQAEGAIKIDGKGPVAWDKFLEENYWYTAEPASDFYHQYPVDLKLCEEFGINGIRISIAWSRIFPNGYGEVNPKGVEFYHKLFAECKKRKVEPFVTLHHFDTPEVLHSNGDFLNRENIEHFVNYAKFCFEEFSEVNYWTTFNEIGPIGDGQYLVGKFPPGIKYDFEKLFQSHHNMVLAHAKAVNLFKKNGYHGEIGMVCALPTKYPYDPNNPKDVRAAELDDIIHNKFILDATFKGEYSKNTMEGVNHILQVNGGKLDLREEDFEELKAAKDLNDFLGINYYMSDWMAEYDGETEIIHNATGNKGSSKYQIKGVGQRKANESIPRTDWDWIIYPQGLYDQISRVKKDYPNYKKIYITENGLGYKDVFEDNTVYDDARIDYIRQHLEVISDAIKDGANVKGYFLWSLMDVFSWSNGYEKRYGLFYVDFETQKRYPKKSAYWYKKVSETKEV</sequence>
<accession>C7N8L9</accession>
<keyword id="KW-0903">Direct protein sequencing</keyword>
<keyword id="KW-0326">Glycosidase</keyword>
<keyword id="KW-0378">Hydrolase</keyword>
<feature type="chain" id="PRO_0000398183" description="6-phospho-beta-galactosidase">
    <location>
        <begin position="1"/>
        <end position="467"/>
    </location>
</feature>
<feature type="active site" description="Proton donor" evidence="1">
    <location>
        <position position="160"/>
    </location>
</feature>
<feature type="active site" description="Nucleophile" evidence="1">
    <location>
        <position position="375"/>
    </location>
</feature>
<feature type="binding site" evidence="1">
    <location>
        <position position="19"/>
    </location>
    <ligand>
        <name>D-galactose 6-phosphate</name>
        <dbReference type="ChEBI" id="CHEBI:91004"/>
    </ligand>
</feature>
<feature type="binding site" evidence="1">
    <location>
        <position position="116"/>
    </location>
    <ligand>
        <name>D-galactose 6-phosphate</name>
        <dbReference type="ChEBI" id="CHEBI:91004"/>
    </ligand>
</feature>
<feature type="binding site" evidence="1">
    <location>
        <position position="159"/>
    </location>
    <ligand>
        <name>D-galactose 6-phosphate</name>
        <dbReference type="ChEBI" id="CHEBI:91004"/>
    </ligand>
</feature>
<feature type="binding site" evidence="1">
    <location>
        <position position="160"/>
    </location>
    <ligand>
        <name>D-galactose 6-phosphate</name>
        <dbReference type="ChEBI" id="CHEBI:91004"/>
    </ligand>
</feature>
<feature type="binding site" evidence="1">
    <location>
        <position position="297"/>
    </location>
    <ligand>
        <name>D-galactose 6-phosphate</name>
        <dbReference type="ChEBI" id="CHEBI:91004"/>
    </ligand>
</feature>
<feature type="binding site" evidence="1">
    <location>
        <position position="428"/>
    </location>
    <ligand>
        <name>D-galactose 6-phosphate</name>
        <dbReference type="ChEBI" id="CHEBI:91004"/>
    </ligand>
</feature>
<feature type="binding site" evidence="1">
    <location>
        <position position="429"/>
    </location>
    <ligand>
        <name>D-galactose 6-phosphate</name>
        <dbReference type="ChEBI" id="CHEBI:91004"/>
    </ligand>
</feature>
<feature type="binding site" evidence="1">
    <location>
        <position position="435"/>
    </location>
    <ligand>
        <name>D-galactose 6-phosphate</name>
        <dbReference type="ChEBI" id="CHEBI:91004"/>
    </ligand>
</feature>
<feature type="binding site" evidence="1">
    <location>
        <position position="437"/>
    </location>
    <ligand>
        <name>D-galactose 6-phosphate</name>
        <dbReference type="ChEBI" id="CHEBI:91004"/>
    </ligand>
</feature>
<protein>
    <recommendedName>
        <fullName evidence="1">6-phospho-beta-galactosidase</fullName>
        <ecNumber evidence="1">3.2.1.85</ecNumber>
    </recommendedName>
    <alternativeName>
        <fullName evidence="1">Beta-D-phosphogalactoside galactohydrolase</fullName>
        <shortName evidence="1">PGALase</shortName>
    </alternativeName>
    <alternativeName>
        <fullName evidence="1">P-beta-Gal</fullName>
        <shortName evidence="1">PBG</shortName>
    </alternativeName>
</protein>
<evidence type="ECO:0000255" key="1">
    <source>
        <dbReference type="HAMAP-Rule" id="MF_01574"/>
    </source>
</evidence>
<evidence type="ECO:0000269" key="2">
    <source>
    </source>
</evidence>
<evidence type="ECO:0000305" key="3"/>
<reference key="1">
    <citation type="journal article" date="2009" name="Stand. Genomic Sci.">
        <title>Complete genome sequence of Leptotrichia buccalis type strain (C-1013-b).</title>
        <authorList>
            <person name="Ivanova N."/>
            <person name="Gronow S."/>
            <person name="Lapidus A."/>
            <person name="Copeland A."/>
            <person name="Glavina Del Rio T."/>
            <person name="Nolan M."/>
            <person name="Lucas S."/>
            <person name="Chen F."/>
            <person name="Tice H."/>
            <person name="Cheng J.F."/>
            <person name="Saunders E."/>
            <person name="Bruce D."/>
            <person name="Goodwin L."/>
            <person name="Brettin T."/>
            <person name="Detter J.C."/>
            <person name="Han C."/>
            <person name="Pitluck S."/>
            <person name="Mikhailova N."/>
            <person name="Pati A."/>
            <person name="Mavrommatis K."/>
            <person name="Chen A."/>
            <person name="Palaniappan K."/>
            <person name="Land M."/>
            <person name="Hauser L."/>
            <person name="Chang Y.J."/>
            <person name="Jeffries C.D."/>
            <person name="Chain P."/>
            <person name="Rohde C."/>
            <person name="Goker M."/>
            <person name="Bristow J."/>
            <person name="Eisen J.A."/>
            <person name="Markowitz V."/>
            <person name="Hugenholtz P."/>
            <person name="Kyrpides N.C."/>
            <person name="Klenk H.P."/>
        </authorList>
    </citation>
    <scope>NUCLEOTIDE SEQUENCE [LARGE SCALE GENOMIC DNA]</scope>
    <source>
        <strain>ATCC 14201 / DSM 1135 / JCM 12969 / NCTC 10249 / C-1013-b</strain>
    </source>
</reference>
<reference key="2">
    <citation type="journal article" date="2002" name="FEMS Microbiol. Lett.">
        <title>Purification and some properties of phospho-beta-galactosidase from the Gram-negative oral bacterium Leptotrichia buccalis ATCC 14201.</title>
        <authorList>
            <person name="Thompson J."/>
        </authorList>
    </citation>
    <scope>PROTEIN SEQUENCE OF 3-33</scope>
    <scope>CATALYTIC ACTIVITY</scope>
    <scope>ACTIVITY REGULATION</scope>
    <scope>BIOPHYSICOCHEMICAL PROPERTIES</scope>
    <scope>INDUCTION</scope>
</reference>
<dbReference type="EC" id="3.2.1.85" evidence="1"/>
<dbReference type="EMBL" id="CP001685">
    <property type="protein sequence ID" value="ACV38500.1"/>
    <property type="molecule type" value="Genomic_DNA"/>
</dbReference>
<dbReference type="RefSeq" id="WP_012806681.1">
    <property type="nucleotide sequence ID" value="NC_013192.1"/>
</dbReference>
<dbReference type="SMR" id="C7N8L9"/>
<dbReference type="STRING" id="523794.Lebu_0590"/>
<dbReference type="CAZy" id="GH1">
    <property type="family name" value="Glycoside Hydrolase Family 1"/>
</dbReference>
<dbReference type="KEGG" id="lba:Lebu_0590"/>
<dbReference type="eggNOG" id="COG2723">
    <property type="taxonomic scope" value="Bacteria"/>
</dbReference>
<dbReference type="HOGENOM" id="CLU_001859_1_3_0"/>
<dbReference type="OrthoDB" id="9765195at2"/>
<dbReference type="UniPathway" id="UPA00542">
    <property type="reaction ID" value="UER00605"/>
</dbReference>
<dbReference type="Proteomes" id="UP000001910">
    <property type="component" value="Chromosome"/>
</dbReference>
<dbReference type="GO" id="GO:0005829">
    <property type="term" value="C:cytosol"/>
    <property type="evidence" value="ECO:0007669"/>
    <property type="project" value="TreeGrafter"/>
</dbReference>
<dbReference type="GO" id="GO:0033920">
    <property type="term" value="F:6-phospho-beta-galactosidase activity"/>
    <property type="evidence" value="ECO:0000314"/>
    <property type="project" value="UniProtKB"/>
</dbReference>
<dbReference type="GO" id="GO:0008422">
    <property type="term" value="F:beta-glucosidase activity"/>
    <property type="evidence" value="ECO:0007669"/>
    <property type="project" value="TreeGrafter"/>
</dbReference>
<dbReference type="GO" id="GO:0015925">
    <property type="term" value="F:galactosidase activity"/>
    <property type="evidence" value="ECO:0000314"/>
    <property type="project" value="UniProtKB"/>
</dbReference>
<dbReference type="GO" id="GO:0005990">
    <property type="term" value="P:lactose catabolic process"/>
    <property type="evidence" value="ECO:0000314"/>
    <property type="project" value="UniProtKB"/>
</dbReference>
<dbReference type="GO" id="GO:0019512">
    <property type="term" value="P:lactose catabolic process via tagatose-6-phosphate"/>
    <property type="evidence" value="ECO:0007669"/>
    <property type="project" value="InterPro"/>
</dbReference>
<dbReference type="FunFam" id="3.20.20.80:FF:000004">
    <property type="entry name" value="Beta-glucosidase 6-phospho-beta-glucosidase"/>
    <property type="match status" value="1"/>
</dbReference>
<dbReference type="Gene3D" id="3.20.20.80">
    <property type="entry name" value="Glycosidases"/>
    <property type="match status" value="1"/>
</dbReference>
<dbReference type="HAMAP" id="MF_01574">
    <property type="entry name" value="LacG"/>
    <property type="match status" value="1"/>
</dbReference>
<dbReference type="InterPro" id="IPR005928">
    <property type="entry name" value="6P-beta-galactosidase"/>
</dbReference>
<dbReference type="InterPro" id="IPR001360">
    <property type="entry name" value="Glyco_hydro_1"/>
</dbReference>
<dbReference type="InterPro" id="IPR018120">
    <property type="entry name" value="Glyco_hydro_1_AS"/>
</dbReference>
<dbReference type="InterPro" id="IPR033132">
    <property type="entry name" value="Glyco_hydro_1_N_CS"/>
</dbReference>
<dbReference type="InterPro" id="IPR017853">
    <property type="entry name" value="Glycoside_hydrolase_SF"/>
</dbReference>
<dbReference type="NCBIfam" id="TIGR01233">
    <property type="entry name" value="lacG"/>
    <property type="match status" value="1"/>
</dbReference>
<dbReference type="NCBIfam" id="NF010036">
    <property type="entry name" value="PRK13511.1"/>
    <property type="match status" value="1"/>
</dbReference>
<dbReference type="PANTHER" id="PTHR10353">
    <property type="entry name" value="GLYCOSYL HYDROLASE"/>
    <property type="match status" value="1"/>
</dbReference>
<dbReference type="PANTHER" id="PTHR10353:SF36">
    <property type="entry name" value="LP05116P"/>
    <property type="match status" value="1"/>
</dbReference>
<dbReference type="Pfam" id="PF00232">
    <property type="entry name" value="Glyco_hydro_1"/>
    <property type="match status" value="1"/>
</dbReference>
<dbReference type="PRINTS" id="PR00131">
    <property type="entry name" value="GLHYDRLASE1"/>
</dbReference>
<dbReference type="SUPFAM" id="SSF51445">
    <property type="entry name" value="(Trans)glycosidases"/>
    <property type="match status" value="1"/>
</dbReference>
<dbReference type="PROSITE" id="PS00572">
    <property type="entry name" value="GLYCOSYL_HYDROL_F1_1"/>
    <property type="match status" value="1"/>
</dbReference>
<dbReference type="PROSITE" id="PS00653">
    <property type="entry name" value="GLYCOSYL_HYDROL_F1_2"/>
    <property type="match status" value="1"/>
</dbReference>
<name>LACG_LEPBD</name>
<gene>
    <name evidence="1" type="primary">lacG</name>
    <name type="ordered locus">Lebu_0590</name>
</gene>
<organism>
    <name type="scientific">Leptotrichia buccalis (strain ATCC 14201 / DSM 1135 / JCM 12969 / NCTC 10249 / C-1013-b)</name>
    <dbReference type="NCBI Taxonomy" id="523794"/>
    <lineage>
        <taxon>Bacteria</taxon>
        <taxon>Fusobacteriati</taxon>
        <taxon>Fusobacteriota</taxon>
        <taxon>Fusobacteriia</taxon>
        <taxon>Fusobacteriales</taxon>
        <taxon>Leptotrichiaceae</taxon>
        <taxon>Leptotrichia</taxon>
    </lineage>
</organism>
<proteinExistence type="evidence at protein level"/>
<comment type="catalytic activity">
    <reaction evidence="1 2">
        <text>a 6-phospho-beta-D-galactoside + H2O = D-galactose 6-phosphate + an alcohol</text>
        <dbReference type="Rhea" id="RHEA:24568"/>
        <dbReference type="ChEBI" id="CHEBI:15377"/>
        <dbReference type="ChEBI" id="CHEBI:30879"/>
        <dbReference type="ChEBI" id="CHEBI:58534"/>
        <dbReference type="ChEBI" id="CHEBI:91004"/>
        <dbReference type="EC" id="3.2.1.85"/>
    </reaction>
</comment>
<comment type="activity regulation">
    <text evidence="2">Inhibited by both galactose-6-phosphate and ATP.</text>
</comment>
<comment type="biophysicochemical properties">
    <kinetics>
        <KM evidence="2">0.54 mM for oNPbetagal6P (at pH 7.5)</KM>
        <Vmax evidence="2">50.94 umol/min/mg enzyme with oNPbetagal6P as substrate</Vmax>
    </kinetics>
    <phDependence>
        <text evidence="2">Optimum pH is 7.0-7.5.</text>
    </phDependence>
</comment>
<comment type="pathway">
    <text evidence="1">Carbohydrate metabolism; lactose degradation; D-galactose 6-phosphate and beta-D-glucose from lactose 6-phosphate: step 1/1.</text>
</comment>
<comment type="induction">
    <text evidence="2">Induced during growth on lactose or lactulose.</text>
</comment>
<comment type="similarity">
    <text evidence="1 3">Belongs to the glycosyl hydrolase 1 family.</text>
</comment>